<sequence>MLSVWNLPVEQQPQQQQQQQQNIINSSNNINSINSALDNILNTTSKGIQLPRFNLLNTSSSGFLTNSNDTLFLENNNNNNNNINQQLNKSVLNSSNKQLDIIKTINEISNEHKSFQPFEITPIKPQSTSTNTYNTEFGVINQNTFVLDSNKIEELRVDTSVLDPLLSLPYNIINNTTNNNNNNNNNNNNNNNNNNSNNNNSNNNNINNNNNKSNTPMKKESTIRNSNSTFEKFESPTLSTTFGLNKEELNTFTTTDMNNYVKQANMVKELSQVEKKELKRQKRLIKNRESAHLSRQRKRERLTDLEHRVEELSSNSIDINKTLSSLENENLILKAEVGQLFEVINDSPVLSALFYKIASLSQQPQKDTIGAY</sequence>
<name>BZPG_DICDI</name>
<keyword id="KW-0238">DNA-binding</keyword>
<keyword id="KW-0539">Nucleus</keyword>
<keyword id="KW-1185">Reference proteome</keyword>
<keyword id="KW-0804">Transcription</keyword>
<keyword id="KW-0805">Transcription regulation</keyword>
<evidence type="ECO:0000250" key="1"/>
<evidence type="ECO:0000255" key="2">
    <source>
        <dbReference type="PROSITE-ProRule" id="PRU00978"/>
    </source>
</evidence>
<evidence type="ECO:0000256" key="3">
    <source>
        <dbReference type="SAM" id="MobiDB-lite"/>
    </source>
</evidence>
<evidence type="ECO:0000305" key="4"/>
<reference key="1">
    <citation type="journal article" date="2005" name="Nature">
        <title>The genome of the social amoeba Dictyostelium discoideum.</title>
        <authorList>
            <person name="Eichinger L."/>
            <person name="Pachebat J.A."/>
            <person name="Gloeckner G."/>
            <person name="Rajandream M.A."/>
            <person name="Sucgang R."/>
            <person name="Berriman M."/>
            <person name="Song J."/>
            <person name="Olsen R."/>
            <person name="Szafranski K."/>
            <person name="Xu Q."/>
            <person name="Tunggal B."/>
            <person name="Kummerfeld S."/>
            <person name="Madera M."/>
            <person name="Konfortov B.A."/>
            <person name="Rivero F."/>
            <person name="Bankier A.T."/>
            <person name="Lehmann R."/>
            <person name="Hamlin N."/>
            <person name="Davies R."/>
            <person name="Gaudet P."/>
            <person name="Fey P."/>
            <person name="Pilcher K."/>
            <person name="Chen G."/>
            <person name="Saunders D."/>
            <person name="Sodergren E.J."/>
            <person name="Davis P."/>
            <person name="Kerhornou A."/>
            <person name="Nie X."/>
            <person name="Hall N."/>
            <person name="Anjard C."/>
            <person name="Hemphill L."/>
            <person name="Bason N."/>
            <person name="Farbrother P."/>
            <person name="Desany B."/>
            <person name="Just E."/>
            <person name="Morio T."/>
            <person name="Rost R."/>
            <person name="Churcher C.M."/>
            <person name="Cooper J."/>
            <person name="Haydock S."/>
            <person name="van Driessche N."/>
            <person name="Cronin A."/>
            <person name="Goodhead I."/>
            <person name="Muzny D.M."/>
            <person name="Mourier T."/>
            <person name="Pain A."/>
            <person name="Lu M."/>
            <person name="Harper D."/>
            <person name="Lindsay R."/>
            <person name="Hauser H."/>
            <person name="James K.D."/>
            <person name="Quiles M."/>
            <person name="Madan Babu M."/>
            <person name="Saito T."/>
            <person name="Buchrieser C."/>
            <person name="Wardroper A."/>
            <person name="Felder M."/>
            <person name="Thangavelu M."/>
            <person name="Johnson D."/>
            <person name="Knights A."/>
            <person name="Loulseged H."/>
            <person name="Mungall K.L."/>
            <person name="Oliver K."/>
            <person name="Price C."/>
            <person name="Quail M.A."/>
            <person name="Urushihara H."/>
            <person name="Hernandez J."/>
            <person name="Rabbinowitsch E."/>
            <person name="Steffen D."/>
            <person name="Sanders M."/>
            <person name="Ma J."/>
            <person name="Kohara Y."/>
            <person name="Sharp S."/>
            <person name="Simmonds M.N."/>
            <person name="Spiegler S."/>
            <person name="Tivey A."/>
            <person name="Sugano S."/>
            <person name="White B."/>
            <person name="Walker D."/>
            <person name="Woodward J.R."/>
            <person name="Winckler T."/>
            <person name="Tanaka Y."/>
            <person name="Shaulsky G."/>
            <person name="Schleicher M."/>
            <person name="Weinstock G.M."/>
            <person name="Rosenthal A."/>
            <person name="Cox E.C."/>
            <person name="Chisholm R.L."/>
            <person name="Gibbs R.A."/>
            <person name="Loomis W.F."/>
            <person name="Platzer M."/>
            <person name="Kay R.R."/>
            <person name="Williams J.G."/>
            <person name="Dear P.H."/>
            <person name="Noegel A.A."/>
            <person name="Barrell B.G."/>
            <person name="Kuspa A."/>
        </authorList>
    </citation>
    <scope>NUCLEOTIDE SEQUENCE [LARGE SCALE GENOMIC DNA]</scope>
    <source>
        <strain>AX4</strain>
    </source>
</reference>
<reference key="2">
    <citation type="journal article" date="2006" name="Development">
        <title>bZIP transcription factor interactions regulate DIF responses in Dictyostelium.</title>
        <authorList>
            <person name="Huang E."/>
            <person name="Blagg S.L."/>
            <person name="Keller T."/>
            <person name="Katoh M."/>
            <person name="Shaulsky G."/>
            <person name="Thompson C.R.L."/>
        </authorList>
    </citation>
    <scope>IDENTIFICATION</scope>
</reference>
<proteinExistence type="inferred from homology"/>
<protein>
    <recommendedName>
        <fullName>Probable basic-leucine zipper transcription factor G</fullName>
    </recommendedName>
</protein>
<comment type="function">
    <text evidence="1">Probable transcriptional regulator.</text>
</comment>
<comment type="subcellular location">
    <subcellularLocation>
        <location evidence="2">Nucleus</location>
    </subcellularLocation>
</comment>
<comment type="similarity">
    <text evidence="4">Belongs to the bZIP family.</text>
</comment>
<gene>
    <name type="primary">bzpG</name>
    <name type="ORF">DDB_G0282749</name>
</gene>
<accession>Q54RZ9</accession>
<organism>
    <name type="scientific">Dictyostelium discoideum</name>
    <name type="common">Social amoeba</name>
    <dbReference type="NCBI Taxonomy" id="44689"/>
    <lineage>
        <taxon>Eukaryota</taxon>
        <taxon>Amoebozoa</taxon>
        <taxon>Evosea</taxon>
        <taxon>Eumycetozoa</taxon>
        <taxon>Dictyostelia</taxon>
        <taxon>Dictyosteliales</taxon>
        <taxon>Dictyosteliaceae</taxon>
        <taxon>Dictyostelium</taxon>
    </lineage>
</organism>
<dbReference type="EMBL" id="AAFI02000047">
    <property type="protein sequence ID" value="EAL66234.1"/>
    <property type="molecule type" value="Genomic_DNA"/>
</dbReference>
<dbReference type="RefSeq" id="XP_640240.1">
    <property type="nucleotide sequence ID" value="XM_635148.1"/>
</dbReference>
<dbReference type="SMR" id="Q54RZ9"/>
<dbReference type="FunCoup" id="Q54RZ9">
    <property type="interactions" value="744"/>
</dbReference>
<dbReference type="STRING" id="44689.Q54RZ9"/>
<dbReference type="PaxDb" id="44689-DDB0216335"/>
<dbReference type="EnsemblProtists" id="EAL66234">
    <property type="protein sequence ID" value="EAL66234"/>
    <property type="gene ID" value="DDB_G0282749"/>
</dbReference>
<dbReference type="GeneID" id="8623779"/>
<dbReference type="KEGG" id="ddi:DDB_G0282749"/>
<dbReference type="dictyBase" id="DDB_G0282749">
    <property type="gene designation" value="bzpG"/>
</dbReference>
<dbReference type="VEuPathDB" id="AmoebaDB:DDB_G0282749"/>
<dbReference type="eggNOG" id="ENOG502RG31">
    <property type="taxonomic scope" value="Eukaryota"/>
</dbReference>
<dbReference type="HOGENOM" id="CLU_744811_0_0_1"/>
<dbReference type="InParanoid" id="Q54RZ9"/>
<dbReference type="OMA" id="GPIRHAN"/>
<dbReference type="PRO" id="PR:Q54RZ9"/>
<dbReference type="Proteomes" id="UP000002195">
    <property type="component" value="Chromosome 3"/>
</dbReference>
<dbReference type="GO" id="GO:0005634">
    <property type="term" value="C:nucleus"/>
    <property type="evidence" value="ECO:0007669"/>
    <property type="project" value="UniProtKB-SubCell"/>
</dbReference>
<dbReference type="GO" id="GO:0003677">
    <property type="term" value="F:DNA binding"/>
    <property type="evidence" value="ECO:0007669"/>
    <property type="project" value="UniProtKB-KW"/>
</dbReference>
<dbReference type="GO" id="GO:0003700">
    <property type="term" value="F:DNA-binding transcription factor activity"/>
    <property type="evidence" value="ECO:0007669"/>
    <property type="project" value="InterPro"/>
</dbReference>
<dbReference type="GO" id="GO:0010737">
    <property type="term" value="P:protein kinase A signaling"/>
    <property type="evidence" value="ECO:0000270"/>
    <property type="project" value="dictyBase"/>
</dbReference>
<dbReference type="CDD" id="cd14704">
    <property type="entry name" value="bZIP_HY5-like"/>
    <property type="match status" value="1"/>
</dbReference>
<dbReference type="Gene3D" id="1.20.5.170">
    <property type="match status" value="1"/>
</dbReference>
<dbReference type="InterPro" id="IPR004827">
    <property type="entry name" value="bZIP"/>
</dbReference>
<dbReference type="InterPro" id="IPR046347">
    <property type="entry name" value="bZIP_sf"/>
</dbReference>
<dbReference type="PANTHER" id="PTHR47416:SF8">
    <property type="entry name" value="BASIC-LEUCINE ZIPPER TRANSCRIPTION FACTOR E-RELATED"/>
    <property type="match status" value="1"/>
</dbReference>
<dbReference type="PANTHER" id="PTHR47416">
    <property type="entry name" value="BASIC-LEUCINE ZIPPER TRANSCRIPTION FACTOR F-RELATED"/>
    <property type="match status" value="1"/>
</dbReference>
<dbReference type="Pfam" id="PF00170">
    <property type="entry name" value="bZIP_1"/>
    <property type="match status" value="1"/>
</dbReference>
<dbReference type="SMART" id="SM00338">
    <property type="entry name" value="BRLZ"/>
    <property type="match status" value="1"/>
</dbReference>
<dbReference type="SUPFAM" id="SSF57959">
    <property type="entry name" value="Leucine zipper domain"/>
    <property type="match status" value="1"/>
</dbReference>
<dbReference type="PROSITE" id="PS50217">
    <property type="entry name" value="BZIP"/>
    <property type="match status" value="1"/>
</dbReference>
<feature type="chain" id="PRO_0000384407" description="Probable basic-leucine zipper transcription factor G">
    <location>
        <begin position="1"/>
        <end position="372"/>
    </location>
</feature>
<feature type="domain" description="bZIP" evidence="2">
    <location>
        <begin position="277"/>
        <end position="340"/>
    </location>
</feature>
<feature type="region of interest" description="Disordered" evidence="3">
    <location>
        <begin position="1"/>
        <end position="20"/>
    </location>
</feature>
<feature type="region of interest" description="Disordered" evidence="3">
    <location>
        <begin position="176"/>
        <end position="234"/>
    </location>
</feature>
<feature type="region of interest" description="Basic motif" evidence="2">
    <location>
        <begin position="279"/>
        <end position="301"/>
    </location>
</feature>
<feature type="region of interest" description="Leucine-zipper" evidence="2">
    <location>
        <begin position="305"/>
        <end position="340"/>
    </location>
</feature>
<feature type="compositionally biased region" description="Low complexity" evidence="3">
    <location>
        <begin position="11"/>
        <end position="20"/>
    </location>
</feature>
<feature type="compositionally biased region" description="Low complexity" evidence="3">
    <location>
        <begin position="176"/>
        <end position="215"/>
    </location>
</feature>
<feature type="compositionally biased region" description="Polar residues" evidence="3">
    <location>
        <begin position="223"/>
        <end position="234"/>
    </location>
</feature>